<dbReference type="EMBL" id="CP000653">
    <property type="protein sequence ID" value="ABP61998.1"/>
    <property type="molecule type" value="Genomic_DNA"/>
</dbReference>
<dbReference type="RefSeq" id="WP_015960326.1">
    <property type="nucleotide sequence ID" value="NC_009436.1"/>
</dbReference>
<dbReference type="STRING" id="399742.Ent638_3336"/>
<dbReference type="KEGG" id="ent:Ent638_3336"/>
<dbReference type="eggNOG" id="COG1279">
    <property type="taxonomic scope" value="Bacteria"/>
</dbReference>
<dbReference type="HOGENOM" id="CLU_087840_0_1_6"/>
<dbReference type="OrthoDB" id="5638726at2"/>
<dbReference type="Proteomes" id="UP000000230">
    <property type="component" value="Chromosome"/>
</dbReference>
<dbReference type="GO" id="GO:0005886">
    <property type="term" value="C:plasma membrane"/>
    <property type="evidence" value="ECO:0007669"/>
    <property type="project" value="UniProtKB-SubCell"/>
</dbReference>
<dbReference type="GO" id="GO:0061459">
    <property type="term" value="F:L-arginine transmembrane transporter activity"/>
    <property type="evidence" value="ECO:0007669"/>
    <property type="project" value="UniProtKB-UniRule"/>
</dbReference>
<dbReference type="HAMAP" id="MF_01901">
    <property type="entry name" value="ArgO"/>
    <property type="match status" value="1"/>
</dbReference>
<dbReference type="InterPro" id="IPR023445">
    <property type="entry name" value="Arg_export_ArgO_enterobac"/>
</dbReference>
<dbReference type="InterPro" id="IPR001123">
    <property type="entry name" value="LeuE-type"/>
</dbReference>
<dbReference type="InterPro" id="IPR004777">
    <property type="entry name" value="Lys/arg_exporter"/>
</dbReference>
<dbReference type="NCBIfam" id="TIGR00948">
    <property type="entry name" value="2a75"/>
    <property type="match status" value="1"/>
</dbReference>
<dbReference type="NCBIfam" id="NF006801">
    <property type="entry name" value="PRK09304.1"/>
    <property type="match status" value="1"/>
</dbReference>
<dbReference type="PANTHER" id="PTHR30086">
    <property type="entry name" value="ARGININE EXPORTER PROTEIN ARGO"/>
    <property type="match status" value="1"/>
</dbReference>
<dbReference type="PANTHER" id="PTHR30086:SF20">
    <property type="entry name" value="ARGININE EXPORTER PROTEIN ARGO-RELATED"/>
    <property type="match status" value="1"/>
</dbReference>
<dbReference type="Pfam" id="PF01810">
    <property type="entry name" value="LysE"/>
    <property type="match status" value="1"/>
</dbReference>
<feature type="chain" id="PRO_1000070580" description="Arginine exporter protein ArgO">
    <location>
        <begin position="1"/>
        <end position="211"/>
    </location>
</feature>
<feature type="transmembrane region" description="Helical" evidence="1">
    <location>
        <begin position="1"/>
        <end position="21"/>
    </location>
</feature>
<feature type="transmembrane region" description="Helical" evidence="1">
    <location>
        <begin position="37"/>
        <end position="57"/>
    </location>
</feature>
<feature type="transmembrane region" description="Helical" evidence="1">
    <location>
        <begin position="68"/>
        <end position="88"/>
    </location>
</feature>
<feature type="transmembrane region" description="Helical" evidence="1">
    <location>
        <begin position="111"/>
        <end position="131"/>
    </location>
</feature>
<feature type="transmembrane region" description="Helical" evidence="1">
    <location>
        <begin position="147"/>
        <end position="167"/>
    </location>
</feature>
<feature type="transmembrane region" description="Helical" evidence="1">
    <location>
        <begin position="186"/>
        <end position="206"/>
    </location>
</feature>
<keyword id="KW-0029">Amino-acid transport</keyword>
<keyword id="KW-0997">Cell inner membrane</keyword>
<keyword id="KW-1003">Cell membrane</keyword>
<keyword id="KW-0472">Membrane</keyword>
<keyword id="KW-0812">Transmembrane</keyword>
<keyword id="KW-1133">Transmembrane helix</keyword>
<keyword id="KW-0813">Transport</keyword>
<organism>
    <name type="scientific">Enterobacter sp. (strain 638)</name>
    <dbReference type="NCBI Taxonomy" id="399742"/>
    <lineage>
        <taxon>Bacteria</taxon>
        <taxon>Pseudomonadati</taxon>
        <taxon>Pseudomonadota</taxon>
        <taxon>Gammaproteobacteria</taxon>
        <taxon>Enterobacterales</taxon>
        <taxon>Enterobacteriaceae</taxon>
        <taxon>Enterobacter</taxon>
    </lineage>
</organism>
<proteinExistence type="inferred from homology"/>
<name>ARGO_ENT38</name>
<sequence>MLSYYFQGLVLGAAMILPLGPQNAFVMNQGIRRQYHLMIAMLCAVSDLLLICAGIFGGSALLMQSPWLLALVTWGGVAFLLWYGFGALKTAMGSNLELATAEVMKQGRWKIIATMLAVTWLNPHVYLDTFVVLGSLGGQLDVEPRRWFALGTVSASFLWFFGLALLAAWLAPRLRTAKAQRVINTLVGLVMWFIAFQLAKEGIHHIQGLLN</sequence>
<reference key="1">
    <citation type="journal article" date="2010" name="PLoS Genet.">
        <title>Genome sequence of the plant growth promoting endophytic bacterium Enterobacter sp. 638.</title>
        <authorList>
            <person name="Taghavi S."/>
            <person name="van der Lelie D."/>
            <person name="Hoffman A."/>
            <person name="Zhang Y.B."/>
            <person name="Walla M.D."/>
            <person name="Vangronsveld J."/>
            <person name="Newman L."/>
            <person name="Monchy S."/>
        </authorList>
    </citation>
    <scope>NUCLEOTIDE SEQUENCE [LARGE SCALE GENOMIC DNA]</scope>
    <source>
        <strain>638</strain>
    </source>
</reference>
<evidence type="ECO:0000255" key="1">
    <source>
        <dbReference type="HAMAP-Rule" id="MF_01901"/>
    </source>
</evidence>
<comment type="function">
    <text evidence="1">Involved in the export of arginine. Important to control the intracellular level of arginine and the correct balance between arginine and lysine.</text>
</comment>
<comment type="catalytic activity">
    <reaction evidence="1">
        <text>L-arginine(in) = L-arginine(out)</text>
        <dbReference type="Rhea" id="RHEA:32143"/>
        <dbReference type="ChEBI" id="CHEBI:32682"/>
    </reaction>
    <physiologicalReaction direction="left-to-right" evidence="1">
        <dbReference type="Rhea" id="RHEA:32144"/>
    </physiologicalReaction>
</comment>
<comment type="subcellular location">
    <subcellularLocation>
        <location evidence="1">Cell inner membrane</location>
        <topology evidence="1">Multi-pass membrane protein</topology>
    </subcellularLocation>
</comment>
<comment type="similarity">
    <text evidence="1">Belongs to the LysE/ArgO transporter (TC 2.A.75) family.</text>
</comment>
<accession>A4WE68</accession>
<gene>
    <name evidence="1" type="primary">argO</name>
    <name type="ordered locus">Ent638_3336</name>
</gene>
<protein>
    <recommendedName>
        <fullName evidence="1">Arginine exporter protein ArgO</fullName>
    </recommendedName>
</protein>